<organism>
    <name type="scientific">Sus scrofa</name>
    <name type="common">Pig</name>
    <dbReference type="NCBI Taxonomy" id="9823"/>
    <lineage>
        <taxon>Eukaryota</taxon>
        <taxon>Metazoa</taxon>
        <taxon>Chordata</taxon>
        <taxon>Craniata</taxon>
        <taxon>Vertebrata</taxon>
        <taxon>Euteleostomi</taxon>
        <taxon>Mammalia</taxon>
        <taxon>Eutheria</taxon>
        <taxon>Laurasiatheria</taxon>
        <taxon>Artiodactyla</taxon>
        <taxon>Suina</taxon>
        <taxon>Suidae</taxon>
        <taxon>Sus</taxon>
    </lineage>
</organism>
<accession>F1SC07</accession>
<name>DYH11_PIG</name>
<feature type="chain" id="PRO_0000454207" description="Dynein axonemal heavy chain 11">
    <location>
        <begin position="1"/>
        <end position="4518"/>
    </location>
</feature>
<feature type="region of interest" description="Stem" evidence="1">
    <location>
        <begin position="1"/>
        <end position="1857"/>
    </location>
</feature>
<feature type="region of interest" description="AAA 1" evidence="1">
    <location>
        <begin position="1858"/>
        <end position="2079"/>
    </location>
</feature>
<feature type="region of interest" description="AAA 2" evidence="1">
    <location>
        <begin position="2139"/>
        <end position="2368"/>
    </location>
</feature>
<feature type="region of interest" description="AAA 3" evidence="1">
    <location>
        <begin position="2474"/>
        <end position="2721"/>
    </location>
</feature>
<feature type="region of interest" description="AAA 4" evidence="1">
    <location>
        <begin position="2819"/>
        <end position="3068"/>
    </location>
</feature>
<feature type="region of interest" description="Stalk" evidence="1">
    <location>
        <begin position="3074"/>
        <end position="3405"/>
    </location>
</feature>
<feature type="region of interest" description="AAA 5" evidence="1">
    <location>
        <begin position="3461"/>
        <end position="3688"/>
    </location>
</feature>
<feature type="region of interest" description="AAA 6" evidence="1">
    <location>
        <begin position="3898"/>
        <end position="4124"/>
    </location>
</feature>
<feature type="coiled-coil region" evidence="3">
    <location>
        <begin position="3322"/>
        <end position="3391"/>
    </location>
</feature>
<feature type="binding site" evidence="3">
    <location>
        <begin position="1896"/>
        <end position="1903"/>
    </location>
    <ligand>
        <name>ATP</name>
        <dbReference type="ChEBI" id="CHEBI:30616"/>
    </ligand>
</feature>
<feature type="binding site" evidence="3">
    <location>
        <begin position="2177"/>
        <end position="2184"/>
    </location>
    <ligand>
        <name>ATP</name>
        <dbReference type="ChEBI" id="CHEBI:30616"/>
    </ligand>
</feature>
<feature type="binding site" evidence="3">
    <location>
        <begin position="2512"/>
        <end position="2519"/>
    </location>
    <ligand>
        <name>ATP</name>
        <dbReference type="ChEBI" id="CHEBI:30616"/>
    </ligand>
</feature>
<feature type="binding site" evidence="3">
    <location>
        <begin position="2857"/>
        <end position="2864"/>
    </location>
    <ligand>
        <name>ATP</name>
        <dbReference type="ChEBI" id="CHEBI:30616"/>
    </ligand>
</feature>
<protein>
    <recommendedName>
        <fullName>Dynein axonemal heavy chain 11</fullName>
    </recommendedName>
    <alternativeName>
        <fullName>Axonemal beta dynein heavy chain 11</fullName>
    </alternativeName>
    <alternativeName>
        <fullName>Ciliary dynein heavy chain 11</fullName>
    </alternativeName>
</protein>
<proteinExistence type="evidence at protein level"/>
<keyword id="KW-0067">ATP-binding</keyword>
<keyword id="KW-0966">Cell projection</keyword>
<keyword id="KW-0969">Cilium</keyword>
<keyword id="KW-0175">Coiled coil</keyword>
<keyword id="KW-0963">Cytoplasm</keyword>
<keyword id="KW-0206">Cytoskeleton</keyword>
<keyword id="KW-0243">Dynein</keyword>
<keyword id="KW-0493">Microtubule</keyword>
<keyword id="KW-0505">Motor protein</keyword>
<keyword id="KW-0547">Nucleotide-binding</keyword>
<keyword id="KW-1185">Reference proteome</keyword>
<keyword id="KW-0677">Repeat</keyword>
<comment type="function">
    <text evidence="2">Force generating protein of respiratory cilia. Produces force towards the minus ends of microtubules. Dynein has ATPase activity; the force-producing power stroke is thought to occur on release of ADP.</text>
</comment>
<comment type="subunit">
    <text evidence="2 4">Consists of at least two heavy chains and a number of intermediate and light chains (By similarity). Interacts with CFAP45 (PubMed:33139725).</text>
</comment>
<comment type="subcellular location">
    <subcellularLocation>
        <location evidence="2">Cytoplasm</location>
        <location evidence="2">Cytoskeleton</location>
        <location evidence="2">Cilium axoneme</location>
    </subcellularLocation>
    <text evidence="2">Located in the proximal region of respiratory cilia.</text>
</comment>
<comment type="domain">
    <text evidence="2">Dynein heavy chains probably consist of an N-terminal stem (which binds cargo and interacts with other dynein components), and the head or motor domain. The motor contains six tandemly-linked AAA domains in the head, which form a ring. A stalk-like structure (formed by two of the coiled coil domains) protrudes between AAA 4 and AAA 5 and terminates in a microtubule-binding site. A seventh domain may also contribute to this ring; it is not clear whether the N-terminus or the C-terminus forms this extra domain. There are four well-conserved and two non-conserved ATPase sites, one per AAA domain. Probably only one of these (within AAA 1) actually hydrolyzes ATP, the others may serve a regulatory function.</text>
</comment>
<comment type="similarity">
    <text evidence="5">Belongs to the dynein heavy chain family.</text>
</comment>
<gene>
    <name type="primary">DNAH11</name>
</gene>
<dbReference type="EMBL" id="AEMK02000070">
    <property type="status" value="NOT_ANNOTATED_CDS"/>
    <property type="molecule type" value="Genomic_DNA"/>
</dbReference>
<dbReference type="SMR" id="F1SC07"/>
<dbReference type="FunCoup" id="F1SC07">
    <property type="interactions" value="226"/>
</dbReference>
<dbReference type="PaxDb" id="9823-ENSSSCP00000016307"/>
<dbReference type="Ensembl" id="ENSSSCT00000016754.5">
    <property type="protein sequence ID" value="ENSSSCP00000016307.4"/>
    <property type="gene ID" value="ENSSSCG00000015379.5"/>
</dbReference>
<dbReference type="VGNC" id="VGNC:87368">
    <property type="gene designation" value="DNAH11"/>
</dbReference>
<dbReference type="eggNOG" id="KOG3595">
    <property type="taxonomic scope" value="Eukaryota"/>
</dbReference>
<dbReference type="GeneTree" id="ENSGT00940000158880"/>
<dbReference type="HOGENOM" id="CLU_000038_4_0_1"/>
<dbReference type="InParanoid" id="F1SC07"/>
<dbReference type="TreeFam" id="TF316836"/>
<dbReference type="Proteomes" id="UP000008227">
    <property type="component" value="Chromosome 9"/>
</dbReference>
<dbReference type="Proteomes" id="UP000314985">
    <property type="component" value="Unplaced"/>
</dbReference>
<dbReference type="Proteomes" id="UP000694570">
    <property type="component" value="Unplaced"/>
</dbReference>
<dbReference type="Proteomes" id="UP000694571">
    <property type="component" value="Unplaced"/>
</dbReference>
<dbReference type="Proteomes" id="UP000694720">
    <property type="component" value="Unplaced"/>
</dbReference>
<dbReference type="Proteomes" id="UP000694722">
    <property type="component" value="Unplaced"/>
</dbReference>
<dbReference type="Proteomes" id="UP000694723">
    <property type="component" value="Unplaced"/>
</dbReference>
<dbReference type="Proteomes" id="UP000694724">
    <property type="component" value="Unplaced"/>
</dbReference>
<dbReference type="Proteomes" id="UP000694725">
    <property type="component" value="Unplaced"/>
</dbReference>
<dbReference type="Proteomes" id="UP000694726">
    <property type="component" value="Unplaced"/>
</dbReference>
<dbReference type="Proteomes" id="UP000694727">
    <property type="component" value="Unplaced"/>
</dbReference>
<dbReference type="Proteomes" id="UP000694728">
    <property type="component" value="Unplaced"/>
</dbReference>
<dbReference type="Bgee" id="ENSSSCG00000015379">
    <property type="expression patterns" value="Expressed in oocyte and 19 other cell types or tissues"/>
</dbReference>
<dbReference type="ExpressionAtlas" id="F1SC07">
    <property type="expression patterns" value="baseline"/>
</dbReference>
<dbReference type="GO" id="GO:0097729">
    <property type="term" value="C:9+2 motile cilium"/>
    <property type="evidence" value="ECO:0000314"/>
    <property type="project" value="GO_Central"/>
</dbReference>
<dbReference type="GO" id="GO:0005930">
    <property type="term" value="C:axoneme"/>
    <property type="evidence" value="ECO:0000314"/>
    <property type="project" value="GO_Central"/>
</dbReference>
<dbReference type="GO" id="GO:0030286">
    <property type="term" value="C:dynein complex"/>
    <property type="evidence" value="ECO:0000318"/>
    <property type="project" value="GO_Central"/>
</dbReference>
<dbReference type="GO" id="GO:0005874">
    <property type="term" value="C:microtubule"/>
    <property type="evidence" value="ECO:0007669"/>
    <property type="project" value="UniProtKB-KW"/>
</dbReference>
<dbReference type="GO" id="GO:0005524">
    <property type="term" value="F:ATP binding"/>
    <property type="evidence" value="ECO:0007669"/>
    <property type="project" value="UniProtKB-KW"/>
</dbReference>
<dbReference type="GO" id="GO:0016887">
    <property type="term" value="F:ATP hydrolysis activity"/>
    <property type="evidence" value="ECO:0007669"/>
    <property type="project" value="InterPro"/>
</dbReference>
<dbReference type="GO" id="GO:0045505">
    <property type="term" value="F:dynein intermediate chain binding"/>
    <property type="evidence" value="ECO:0000318"/>
    <property type="project" value="GO_Central"/>
</dbReference>
<dbReference type="GO" id="GO:0051959">
    <property type="term" value="F:dynein light intermediate chain binding"/>
    <property type="evidence" value="ECO:0000318"/>
    <property type="project" value="GO_Central"/>
</dbReference>
<dbReference type="GO" id="GO:0008569">
    <property type="term" value="F:minus-end-directed microtubule motor activity"/>
    <property type="evidence" value="ECO:0000318"/>
    <property type="project" value="GO_Central"/>
</dbReference>
<dbReference type="GO" id="GO:0060294">
    <property type="term" value="P:cilium movement involved in cell motility"/>
    <property type="evidence" value="ECO:0000318"/>
    <property type="project" value="GO_Central"/>
</dbReference>
<dbReference type="FunFam" id="1.20.1270.280:FF:000008">
    <property type="entry name" value="Dynein axonemal heavy chain 11"/>
    <property type="match status" value="1"/>
</dbReference>
<dbReference type="FunFam" id="3.40.50.300:FF:000667">
    <property type="entry name" value="Dynein axonemal heavy chain 11"/>
    <property type="match status" value="1"/>
</dbReference>
<dbReference type="FunFam" id="1.10.287.2620:FF:000004">
    <property type="entry name" value="Dynein axonemal heavy chain 17"/>
    <property type="match status" value="1"/>
</dbReference>
<dbReference type="FunFam" id="1.20.920.20:FF:000003">
    <property type="entry name" value="Dynein axonemal heavy chain 17"/>
    <property type="match status" value="1"/>
</dbReference>
<dbReference type="FunFam" id="1.20.920.30:FF:000003">
    <property type="entry name" value="Dynein axonemal heavy chain 17"/>
    <property type="match status" value="1"/>
</dbReference>
<dbReference type="FunFam" id="3.10.490.20:FF:000002">
    <property type="entry name" value="Dynein axonemal heavy chain 17"/>
    <property type="match status" value="1"/>
</dbReference>
<dbReference type="FunFam" id="3.40.50.300:FF:000219">
    <property type="entry name" value="Dynein axonemal heavy chain 17"/>
    <property type="match status" value="1"/>
</dbReference>
<dbReference type="FunFam" id="1.10.8.1220:FF:000001">
    <property type="entry name" value="Dynein axonemal heavy chain 5"/>
    <property type="match status" value="1"/>
</dbReference>
<dbReference type="FunFam" id="3.20.180.20:FF:000001">
    <property type="entry name" value="Dynein axonemal heavy chain 5"/>
    <property type="match status" value="1"/>
</dbReference>
<dbReference type="FunFam" id="3.40.50.300:FF:002141">
    <property type="entry name" value="Dynein heavy chain"/>
    <property type="match status" value="1"/>
</dbReference>
<dbReference type="FunFam" id="1.10.8.710:FF:000002">
    <property type="entry name" value="dynein heavy chain 17, axonemal"/>
    <property type="match status" value="1"/>
</dbReference>
<dbReference type="FunFam" id="1.20.140.100:FF:000001">
    <property type="entry name" value="dynein heavy chain 17, axonemal"/>
    <property type="match status" value="1"/>
</dbReference>
<dbReference type="FunFam" id="3.40.50.300:FF:000411">
    <property type="entry name" value="dynein heavy chain 17, axonemal"/>
    <property type="match status" value="1"/>
</dbReference>
<dbReference type="FunFam" id="1.10.8.720:FF:000002">
    <property type="entry name" value="Dynein heavy chain 9, axonemal"/>
    <property type="match status" value="1"/>
</dbReference>
<dbReference type="FunFam" id="1.20.58.1120:FF:000002">
    <property type="entry name" value="Dynein heavy chain 9, axonemal"/>
    <property type="match status" value="1"/>
</dbReference>
<dbReference type="FunFam" id="3.40.50.300:FF:000049">
    <property type="entry name" value="Dynein, axonemal, heavy chain 5"/>
    <property type="match status" value="1"/>
</dbReference>
<dbReference type="FunFam" id="1.10.472.130:FF:000001">
    <property type="entry name" value="Dynein, axonemal, heavy chain 9"/>
    <property type="match status" value="1"/>
</dbReference>
<dbReference type="Gene3D" id="1.10.287.2620">
    <property type="match status" value="1"/>
</dbReference>
<dbReference type="Gene3D" id="1.10.472.130">
    <property type="match status" value="1"/>
</dbReference>
<dbReference type="Gene3D" id="1.10.8.1220">
    <property type="match status" value="1"/>
</dbReference>
<dbReference type="Gene3D" id="1.10.8.710">
    <property type="match status" value="1"/>
</dbReference>
<dbReference type="Gene3D" id="1.20.1270.280">
    <property type="match status" value="1"/>
</dbReference>
<dbReference type="Gene3D" id="1.20.58.1120">
    <property type="match status" value="1"/>
</dbReference>
<dbReference type="Gene3D" id="1.20.920.20">
    <property type="match status" value="1"/>
</dbReference>
<dbReference type="Gene3D" id="1.20.920.30">
    <property type="match status" value="1"/>
</dbReference>
<dbReference type="Gene3D" id="3.10.490.20">
    <property type="match status" value="1"/>
</dbReference>
<dbReference type="Gene3D" id="6.10.140.1060">
    <property type="match status" value="1"/>
</dbReference>
<dbReference type="Gene3D" id="1.20.140.100">
    <property type="entry name" value="Dynein heavy chain, N-terminal domain 2"/>
    <property type="match status" value="1"/>
</dbReference>
<dbReference type="Gene3D" id="3.20.180.20">
    <property type="entry name" value="Dynein heavy chain, N-terminal domain 2"/>
    <property type="match status" value="1"/>
</dbReference>
<dbReference type="Gene3D" id="3.40.50.300">
    <property type="entry name" value="P-loop containing nucleotide triphosphate hydrolases"/>
    <property type="match status" value="5"/>
</dbReference>
<dbReference type="Gene3D" id="1.10.8.720">
    <property type="entry name" value="Region D6 of dynein motor"/>
    <property type="match status" value="1"/>
</dbReference>
<dbReference type="InterPro" id="IPR003593">
    <property type="entry name" value="AAA+_ATPase"/>
</dbReference>
<dbReference type="InterPro" id="IPR035699">
    <property type="entry name" value="AAA_6"/>
</dbReference>
<dbReference type="InterPro" id="IPR035706">
    <property type="entry name" value="AAA_9"/>
</dbReference>
<dbReference type="InterPro" id="IPR041658">
    <property type="entry name" value="AAA_lid_11"/>
</dbReference>
<dbReference type="InterPro" id="IPR042219">
    <property type="entry name" value="AAA_lid_11_sf"/>
</dbReference>
<dbReference type="InterPro" id="IPR026983">
    <property type="entry name" value="DHC"/>
</dbReference>
<dbReference type="InterPro" id="IPR041589">
    <property type="entry name" value="DNAH3_AAA_lid_1"/>
</dbReference>
<dbReference type="InterPro" id="IPR042222">
    <property type="entry name" value="Dynein_2_N"/>
</dbReference>
<dbReference type="InterPro" id="IPR043157">
    <property type="entry name" value="Dynein_AAA1S"/>
</dbReference>
<dbReference type="InterPro" id="IPR041466">
    <property type="entry name" value="Dynein_AAA5_ext"/>
</dbReference>
<dbReference type="InterPro" id="IPR041228">
    <property type="entry name" value="Dynein_C"/>
</dbReference>
<dbReference type="InterPro" id="IPR043160">
    <property type="entry name" value="Dynein_C_barrel"/>
</dbReference>
<dbReference type="InterPro" id="IPR024743">
    <property type="entry name" value="Dynein_HC_stalk"/>
</dbReference>
<dbReference type="InterPro" id="IPR024317">
    <property type="entry name" value="Dynein_heavy_chain_D4_dom"/>
</dbReference>
<dbReference type="InterPro" id="IPR004273">
    <property type="entry name" value="Dynein_heavy_D6_P-loop"/>
</dbReference>
<dbReference type="InterPro" id="IPR013602">
    <property type="entry name" value="Dynein_heavy_linker"/>
</dbReference>
<dbReference type="InterPro" id="IPR013594">
    <property type="entry name" value="Dynein_heavy_tail"/>
</dbReference>
<dbReference type="InterPro" id="IPR042228">
    <property type="entry name" value="Dynein_linker_3"/>
</dbReference>
<dbReference type="InterPro" id="IPR027417">
    <property type="entry name" value="P-loop_NTPase"/>
</dbReference>
<dbReference type="PANTHER" id="PTHR45703:SF12">
    <property type="entry name" value="DYNEIN AXONEMAL HEAVY CHAIN 11"/>
    <property type="match status" value="1"/>
</dbReference>
<dbReference type="PANTHER" id="PTHR45703">
    <property type="entry name" value="DYNEIN HEAVY CHAIN"/>
    <property type="match status" value="1"/>
</dbReference>
<dbReference type="Pfam" id="PF12774">
    <property type="entry name" value="AAA_6"/>
    <property type="match status" value="1"/>
</dbReference>
<dbReference type="Pfam" id="PF12775">
    <property type="entry name" value="AAA_7"/>
    <property type="match status" value="1"/>
</dbReference>
<dbReference type="Pfam" id="PF12780">
    <property type="entry name" value="AAA_8"/>
    <property type="match status" value="1"/>
</dbReference>
<dbReference type="Pfam" id="PF12781">
    <property type="entry name" value="AAA_9"/>
    <property type="match status" value="1"/>
</dbReference>
<dbReference type="Pfam" id="PF17857">
    <property type="entry name" value="AAA_lid_1"/>
    <property type="match status" value="1"/>
</dbReference>
<dbReference type="Pfam" id="PF18198">
    <property type="entry name" value="AAA_lid_11"/>
    <property type="match status" value="1"/>
</dbReference>
<dbReference type="Pfam" id="PF08385">
    <property type="entry name" value="DHC_N1"/>
    <property type="match status" value="1"/>
</dbReference>
<dbReference type="Pfam" id="PF08393">
    <property type="entry name" value="DHC_N2"/>
    <property type="match status" value="1"/>
</dbReference>
<dbReference type="Pfam" id="PF17852">
    <property type="entry name" value="Dynein_AAA_lid"/>
    <property type="match status" value="1"/>
</dbReference>
<dbReference type="Pfam" id="PF18199">
    <property type="entry name" value="Dynein_C"/>
    <property type="match status" value="1"/>
</dbReference>
<dbReference type="Pfam" id="PF03028">
    <property type="entry name" value="Dynein_heavy"/>
    <property type="match status" value="1"/>
</dbReference>
<dbReference type="Pfam" id="PF12777">
    <property type="entry name" value="MT"/>
    <property type="match status" value="1"/>
</dbReference>
<dbReference type="SMART" id="SM00382">
    <property type="entry name" value="AAA"/>
    <property type="match status" value="3"/>
</dbReference>
<dbReference type="SUPFAM" id="SSF52540">
    <property type="entry name" value="P-loop containing nucleoside triphosphate hydrolases"/>
    <property type="match status" value="4"/>
</dbReference>
<reference key="1">
    <citation type="submission" date="2009-11" db="EMBL/GenBank/DDBJ databases">
        <authorList>
            <consortium name="Porcine genome sequencing project"/>
        </authorList>
    </citation>
    <scope>NUCLEOTIDE SEQUENCE [LARGE SCALE GENOMIC DNA]</scope>
    <scope>IDENTIFICATION</scope>
    <source>
        <strain>Duroc</strain>
    </source>
</reference>
<reference key="2">
    <citation type="journal article" date="2020" name="Nat. Commun.">
        <title>CFAP45 deficiency causes situs abnormalities and asthenospermia by disrupting an axonemal adenine nucleotide homeostasis module.</title>
        <authorList>
            <person name="Dougherty G.W."/>
            <person name="Mizuno K."/>
            <person name="Noethe-Menchen T."/>
            <person name="Ikawa Y."/>
            <person name="Boldt K."/>
            <person name="Ta-Shma A."/>
            <person name="Aprea I."/>
            <person name="Minegishi K."/>
            <person name="Pang Y.P."/>
            <person name="Pennekamp P."/>
            <person name="Loges N.T."/>
            <person name="Raidt J."/>
            <person name="Hjeij R."/>
            <person name="Wallmeier J."/>
            <person name="Mussaffi H."/>
            <person name="Perles Z."/>
            <person name="Elpeleg O."/>
            <person name="Rabert F."/>
            <person name="Shiratori H."/>
            <person name="Letteboer S.J."/>
            <person name="Horn N."/>
            <person name="Young S."/>
            <person name="Struenker T."/>
            <person name="Stumme F."/>
            <person name="Werner C."/>
            <person name="Olbrich H."/>
            <person name="Takaoka K."/>
            <person name="Ide T."/>
            <person name="Twan W.K."/>
            <person name="Biebach L."/>
            <person name="Grosse-Onnebrink J."/>
            <person name="Klinkenbusch J.A."/>
            <person name="Praveen K."/>
            <person name="Bracht D.C."/>
            <person name="Hoeben I.M."/>
            <person name="Junger K."/>
            <person name="Guetzlaff J."/>
            <person name="Cindric S."/>
            <person name="Aviram M."/>
            <person name="Kaiser T."/>
            <person name="Memari Y."/>
            <person name="Dzeja P.P."/>
            <person name="Dworniczak B."/>
            <person name="Ueffing M."/>
            <person name="Roepman R."/>
            <person name="Bartscherer K."/>
            <person name="Katsanis N."/>
            <person name="Davis E.E."/>
            <person name="Amirav I."/>
            <person name="Hamada H."/>
            <person name="Omran H."/>
        </authorList>
    </citation>
    <scope>INTERACTION WITH CFAP45</scope>
</reference>
<evidence type="ECO:0000250" key="1"/>
<evidence type="ECO:0000250" key="2">
    <source>
        <dbReference type="UniProtKB" id="Q96DT5"/>
    </source>
</evidence>
<evidence type="ECO:0000255" key="3"/>
<evidence type="ECO:0000269" key="4">
    <source>
    </source>
</evidence>
<evidence type="ECO:0000305" key="5"/>
<sequence length="4518" mass="519618">MAASVAAQEAHGFRKVPTLSLTPGVGMEAAGLVELEEEEEEEEEEEAAARRARSFVQDARVRFVGGRLEQMLGFPEEKWSQHLESEDNRQILGEFLESPGPACLVFSIAAAGQLATSHQIPRDAKHKLVYIAKKITENTGVNDFSQTVVFGELPASSVGYVTAFLDEILVPIISNKNNHKSWSCFISQDMERHVEVMRNKMHIFRGKMLRRTLLPIPTIAGNIDLDQKYSETRLEPNERTILHVLESVVIKWSHQIQEVVEKDSVQPLLSGLHSNPETELDFWTMRRENLSCIYDQLQAPIVLKMVKILKNKQSSYFPTLRDIFLSVKNALREAQDVELYLRPLRRHIQCLQETEFPQTRVLIAPLFHTICLIWSHSKFYNTPARVIVLLQEFCNLFIDQARAYLSPEHLLKGELEDSLEKVQVVINVFKTFKNSFFNYRKGLASYFMGKKEMKPWDFRSHLVFWRFDKFLDRFMKIEDIFVTTLEFEKLERLEFGGTKGAIFNGQIHEMSEELMELCKVFKQSTYDPSDYNNMEFESEYAMFKSKTVDFDRRLGTILCVALFNCNGLEAAFKLLTIFGNFLEKPVVMEIFSPHYSTLVHMFNAELDMCKQLYNEHVKQIEQGTVVLNKNMPFTSGNIKWAKEVLDRLQMFWSNFASLRYLSLESPDDAVVYQKYTEMTTLLDQFENHVYNEWKSNVEEICDFSLNQPLIRFSAVNGLLSVNFDPKLVAVLREVKYLLMLKKSDIPDSALAIFKKRDTLLKYIGNLELLVQGYNKLRQTLLDVEYPLIKDELRAVDEELQAAATSLTWQDDCLRDIERVKTATSELERRVEHTHDNVRAIQQMMRAWAEGTLLPRREHRRETALTWEDKGDLFMKKYKQIQEDGCKIHSLVEENRRLFKANPSLDTWKIYVEFIDDIVVEGFFQTIMHDLDFFLMNTEKQLKPAPFFQAQMILMPPEILFKPSLEREAGDGFYDLVEEMLCSSFRMSAQMKRVAAHLGVANYQNDMDNMLGLAEVRQEIMKRVADVISKVLDFRSTLDMYAYLWVDDRAEFMKHFLLYGHIVSSEETDPLADEDIPEQSPTLEQFKEQIDIYEALYVQMSKFDDFRVFDSWFKVDMKPFKVSLLNIIRKWSWMFQEHLLRFVIDSLNELQEFIKETDAGLQRELSEGDHDGLVDIMGHLLAVRSRQRATDELFEPLKETITLLETYGQKMPEQIYVQLEELPERWETTKKIAATVRHEVSPLQNAEVTLIRKKCISFDEKQAEFRERFRLCAPLGFNAENPYTVLDKAHQELEALEEEVLQMQESTHVFEVALPEYKQMKQCRKEIKLLKGLWDVIIYVRRSIDNWTKTQWRQINVEQMDVELRRFAKEIWSLDKEVRVWDAYSGLEGTVKDMTTSLRAVAELQSPALRDRHWHQLMKAIGVKFSINEAMTLADLLALQLHQVEEDVRSIVDKAVKELGTEKVINEIIQTWATMEFSYEVHYRTGIPLLKSDEQLFETLEHNQVQLQTLLQSKYVEYFIEQVTSWQHKLNTADSAIFTWMEVQRTWSHLESIFVCSEDVRIQLKEDARRFDEVDVEFKELMFRTAKIKNVLQATCRPNLCEKLKDLQYRLSLCEKALAEYLETKRVAFPRFYFISSADLLDILSKGAQPAQVTRHLSKLFDSIADLRFEDDQDVSASRAVGMYSKEKEYVPFSATCECTGHVETWLLQLEQIMKETVRHSITEAIAAYEDKPREVWIFDFPAQVALTSSQIWWTTDVGIAFSRLEEGYETALKDFHKKQISQLNTLIALLLGELLPGDRQKIMTICTIDVHARDVVAKLISQKVRSPQAFAWLSQLRHQWEDTRKHCLVHICDAQFQYFYEYLGNSPRLVITPLTDRCYITLTQSLHLTMSGAPAGPAGTGKTETTKDLGRALGMMVYVFNCSEQMDYKSIGNIYKGLVQTGAWGCFDEFNRISVEVLSVVAVQVKMIHDAIRNRKKRFVFLGEAITLKPSVGIFITMNPGYAGRTELPENLKALFRPCAMVAPDIELICEIMLVAEGFVDARSLAHKFITLYTLCRELLSKQDHYDWGLRAVKSVLVVAGSLKRGDKSRPEEQVLMRALRDFNMPKIVTDDIPVFLGLVSDLFPALDVPRRRAPHFEQMVRQSTVELRLQPEENFILKVVQLEELLAVRHSVFVIGNAGTGKSKILRTLNRTYVNMKQKPVWNDLNPKAVTTDELFGFIHHATREWKDGNVVYSLIGLFSSLLREQANLRQDGPKWIVLDGDIDPMWIESLNTVMDDNKVLTLASNERIALTPSMRLLFEIHHLRTATPATVSRAGILYVNPQDLGWNPYVASWIDRRRHQSEKANLTILFDKYVPACLDKLRTSFKTITSIPESSLVQTVCTLLECLLTPENVPSDSPKDVYEVYFVFACVWAFGGTLSQDQLSGCQAEFSRWWHKEMKAVKFPSQGTIFDYYLDHKTKKFLPWADKIPKFTMDPEVPLQRVLVHTSETTRLRYFIELLLEKGQPLMLVGNAGVGKTVFVGDMLTSLSEAYIVSRVPFNYYTTSAALQRILEKPLEKKAGRNYGPGGNKKMVYFIDDMNMPEVDLYGTVQPHTLIRQHIDYGHWYDRQKVRLKEIHGCQYVACMNPMVGSFTINPRLQRHFTVFAFNFPSMDALNTIYSQILSSHFQHQAFGPSVLRSGPALIQATIAFHQTMTHNFLPTAIKFHYLFNLRDLSNVFQGILFASSECLKGPNDLIQLWLHESYRVYGDRLIDTKDCNLFQKKMLETANKYFEGVDSQLLLQQPLIYCHFANGKEDLCYMPVKDWEVLKTFLTEALDNYNDLNAAMPLVLFEDAMQHVCRISRILQTPQGSALLIGVGGSGKQSLSRLAAYICGLEVFQVTLTQGFGIQELRVDLANLYIRTGAKNLPTAFLLTDAQVLDESFLVLINDLLASGEIPDLFSDEDVDKIISGIRNEVRSLGMVDSKENCWKFFLARARLHLKIILCFSPVGHTLRDRARKFPALVNCTAVDWFHAWPREALVTVSRRFIEETRGIEPLDKDSISLFMAHVHTSVNEMSTRFYQNEGRHNYTTPKSFLEQISLFKNLLKKKQKEVSQKKEHLVNGIQKLKTTASQVGALKARLASQEAELQLRNQDAEALIAKIGLQTEKVSREKAIADAEERKVTAIQTEVSQKQRECEADLLKAEPALVAATAALNTLNRVNLTELKVFPNPPNAVTNVTAAVMVLLAPQGRVPKDRSWKAAKVFMGKVDDFLQALINYDKEHIPENCLKVVNEQYLKDPEFNPNLIRTKSFAAAGLCAWVINIIKFYEVYCDVEPKRHALAQANLELATATEKLEAIRKKLADLDRNLSRLTASFEKAIAEKVRCQEEVNQTNKTIKLANRLVKELEVKKIRWGQSIKSFEAQEKTLCGDILLTAAYVSYVGPFTQQYRQELVDCMWVPFLHWKVSIPMTEGLDVIAMLTDDATIATWNNEGLPNDRMSTENAAILTHCQRWPLMIDPQQQGIKWIKKKYGTDLKVTHLGQKGFLNDIETALAFGDVILIENLEETIDPVLDPLLGRNTIKKGKYIKIGDKECEFNHNFRLILHTKLANPHYKPELQAQTTLLNFTVTQDGLEAQLLAEVVSIERPDLEKLKLVLTKHQNDCKIELKYLEDDLLLRLSAAEGSFLDDTKLVERLETAKATAAEIERKVIEARENERKINEARERYRPVAARASLLYFVINDLRKINPIYQFSLKAFNLLFQRAIEQADKVEDAQGRISALTESITHAVFLSTSQALFEKDKLTFLSQMAFQILLRKKEIDPLELDFLLRFTVEHTYPSPVDFLTPQAWSALKAVALREEFRGLDRDVEGSAKQWRRWAESECPEKEKLPQEWKKKSLIQKLIILRALRPDRMTYALRNFVEEKLGAKYVERTRLDLIKALEESSPACPVFFILSPGVDALKDLEILGKRLGFTSDLGTFHNVSLGQGQEMVAEVALEKASKGGHWVMLQNVHLVAKWLGTLEKLLERFSQGSHRDYRVFMSAESAPTPHEHVIPPGLLENSIKITNEPPTGMLANLHAALYNFDQDTLEACSKEQEFKSILFSLCYFHACVAGRLRFGPQGWSRSYPFSPRDLTICAHVLYNYLEANPHVPWEDLRYLFGEIMYGGHVTDEWDRKLCRVYLEEFMNPSLIDDELMLAPGFAAPPNLDYSGYHQYIEEMLPPESPALYGLHPNAEIEFLTVTSNTLFRTLLEIQPKNALSNEELGQSTEDKVKNVLEDILEKLPEEFNMAEIMQKNPNRSPYVLVCFQECERMNILLQEIRVSLQRLDLGLKGELTLSPDMEAQQSALSYDAVPDTWSKVAYPSTYGLAQWFNDLLLRCRELDTWTQDLALPAVVWLSGFFNPQSFLTAIMQTMARKNEWPLDKMCLTIDVTKKMKEDYGHAPREGAYLHGLLLEGARWDSQSGTIVDAHLKELRSAMPVIFAKAIPMDRQETKHTYECPVYRTKMRGPNYVWTFRLKSKEKTAKWVLAGVALLLEA</sequence>